<proteinExistence type="evidence at transcript level"/>
<comment type="similarity">
    <text evidence="2">Belongs to the eukaryotic ribosomal protein eL13 family.</text>
</comment>
<reference key="1">
    <citation type="journal article" date="1993" name="Plant Mol. Biol.">
        <title>Two related, low-temperature-induced genes from Brassica napus are homologous to the human tumour bbc1 (breast basic conserved) gene.</title>
        <authorList>
            <person name="Saez-Vasquez J."/>
            <person name="Raynal M."/>
            <person name="Meza-Basso L."/>
            <person name="Delseny M."/>
        </authorList>
    </citation>
    <scope>NUCLEOTIDE SEQUENCE [MRNA]</scope>
    <source>
        <strain>cv. Samourai</strain>
    </source>
</reference>
<feature type="chain" id="PRO_0000192932" description="Large ribosomal subunit protein eL13y">
    <location>
        <begin position="1"/>
        <end position="206"/>
    </location>
</feature>
<feature type="region of interest" description="Disordered" evidence="1">
    <location>
        <begin position="182"/>
        <end position="206"/>
    </location>
</feature>
<feature type="compositionally biased region" description="Basic residues" evidence="1">
    <location>
        <begin position="186"/>
        <end position="195"/>
    </location>
</feature>
<feature type="compositionally biased region" description="Basic and acidic residues" evidence="1">
    <location>
        <begin position="196"/>
        <end position="206"/>
    </location>
</feature>
<organism>
    <name type="scientific">Brassica napus</name>
    <name type="common">Rape</name>
    <dbReference type="NCBI Taxonomy" id="3708"/>
    <lineage>
        <taxon>Eukaryota</taxon>
        <taxon>Viridiplantae</taxon>
        <taxon>Streptophyta</taxon>
        <taxon>Embryophyta</taxon>
        <taxon>Tracheophyta</taxon>
        <taxon>Spermatophyta</taxon>
        <taxon>Magnoliopsida</taxon>
        <taxon>eudicotyledons</taxon>
        <taxon>Gunneridae</taxon>
        <taxon>Pentapetalae</taxon>
        <taxon>rosids</taxon>
        <taxon>malvids</taxon>
        <taxon>Brassicales</taxon>
        <taxon>Brassicaceae</taxon>
        <taxon>Brassiceae</taxon>
        <taxon>Brassica</taxon>
    </lineage>
</organism>
<dbReference type="EMBL" id="Z22620">
    <property type="protein sequence ID" value="CAA80343.1"/>
    <property type="molecule type" value="mRNA"/>
</dbReference>
<dbReference type="EMBL" id="Z22619">
    <property type="protein sequence ID" value="CAA80342.1"/>
    <property type="molecule type" value="mRNA"/>
</dbReference>
<dbReference type="PIR" id="S42555">
    <property type="entry name" value="S42555"/>
</dbReference>
<dbReference type="RefSeq" id="NP_001302907.1">
    <property type="nucleotide sequence ID" value="NM_001315978.1"/>
</dbReference>
<dbReference type="SMR" id="P41129"/>
<dbReference type="EnsemblPlants" id="CDX86997">
    <property type="protein sequence ID" value="CDX86997"/>
    <property type="gene ID" value="GSBRNA2T00145851001"/>
</dbReference>
<dbReference type="GeneID" id="106387836"/>
<dbReference type="Gramene" id="CDX86997">
    <property type="protein sequence ID" value="CDX86997"/>
    <property type="gene ID" value="GSBRNA2T00145851001"/>
</dbReference>
<dbReference type="KEGG" id="bna:106387836"/>
<dbReference type="OMA" id="TNARHMG"/>
<dbReference type="OrthoDB" id="1092412at2759"/>
<dbReference type="GO" id="GO:1990904">
    <property type="term" value="C:ribonucleoprotein complex"/>
    <property type="evidence" value="ECO:0007669"/>
    <property type="project" value="UniProtKB-KW"/>
</dbReference>
<dbReference type="GO" id="GO:0005840">
    <property type="term" value="C:ribosome"/>
    <property type="evidence" value="ECO:0007669"/>
    <property type="project" value="UniProtKB-KW"/>
</dbReference>
<dbReference type="GO" id="GO:0003735">
    <property type="term" value="F:structural constituent of ribosome"/>
    <property type="evidence" value="ECO:0007669"/>
    <property type="project" value="InterPro"/>
</dbReference>
<dbReference type="GO" id="GO:0006412">
    <property type="term" value="P:translation"/>
    <property type="evidence" value="ECO:0007669"/>
    <property type="project" value="InterPro"/>
</dbReference>
<dbReference type="FunFam" id="1.20.5.110:FF:000003">
    <property type="entry name" value="60S ribosomal protein L13"/>
    <property type="match status" value="1"/>
</dbReference>
<dbReference type="Gene3D" id="1.20.5.110">
    <property type="match status" value="1"/>
</dbReference>
<dbReference type="HAMAP" id="MF_00499">
    <property type="entry name" value="Ribosomal_eL13"/>
    <property type="match status" value="1"/>
</dbReference>
<dbReference type="InterPro" id="IPR001380">
    <property type="entry name" value="Ribosomal_eL13"/>
</dbReference>
<dbReference type="InterPro" id="IPR018256">
    <property type="entry name" value="Ribosomal_eL13_CS"/>
</dbReference>
<dbReference type="PANTHER" id="PTHR11722">
    <property type="entry name" value="60S RIBOSOMAL PROTEIN L13"/>
    <property type="match status" value="1"/>
</dbReference>
<dbReference type="PANTHER" id="PTHR11722:SF12">
    <property type="entry name" value="LARGE RIBOSOMAL SUBUNIT PROTEIN EL13Y-RELATED"/>
    <property type="match status" value="1"/>
</dbReference>
<dbReference type="Pfam" id="PF01294">
    <property type="entry name" value="Ribosomal_L13e"/>
    <property type="match status" value="1"/>
</dbReference>
<dbReference type="PROSITE" id="PS01104">
    <property type="entry name" value="RIBOSOMAL_L13E"/>
    <property type="match status" value="1"/>
</dbReference>
<keyword id="KW-0687">Ribonucleoprotein</keyword>
<keyword id="KW-0689">Ribosomal protein</keyword>
<accession>P41129</accession>
<evidence type="ECO:0000256" key="1">
    <source>
        <dbReference type="SAM" id="MobiDB-lite"/>
    </source>
</evidence>
<evidence type="ECO:0000305" key="2"/>
<sequence>MKHNNVIPNGHFKKHWQNYVKTWFNQPARKTRRRVARQKKAVKIFPRPTAGPLRPVVHGQTLKYNMKVRTGKGFTLEELKAAGIPKKLAPTIGISLDHRRKNRSLEGLQSNVQRLKTYKAKLVIFPRRARKVKAGDSTAEELANATQVQGDYMPIVREKQAMELVKLTSEMKSVNAYDKIRLERTNKRHAGARAKRAADAEKEEKK</sequence>
<name>RL132_BRANA</name>
<protein>
    <recommendedName>
        <fullName evidence="2">Large ribosomal subunit protein eL13y</fullName>
    </recommendedName>
    <alternativeName>
        <fullName>60S ribosomal protein L13-2</fullName>
    </alternativeName>
    <alternativeName>
        <fullName>Cold-induced protein C24B</fullName>
    </alternativeName>
</protein>